<comment type="subunit">
    <text evidence="1">Binds actin. Component of the N-Cor repressor complex, at least composed of NCOR1, NCOR2, HDAC3, TBL1X, TBL1R, CORO2A and GPS2.</text>
</comment>
<comment type="similarity">
    <text evidence="4">Belongs to the WD repeat coronin family.</text>
</comment>
<evidence type="ECO:0000250" key="1"/>
<evidence type="ECO:0000255" key="2"/>
<evidence type="ECO:0000256" key="3">
    <source>
        <dbReference type="SAM" id="MobiDB-lite"/>
    </source>
</evidence>
<evidence type="ECO:0000305" key="4"/>
<protein>
    <recommendedName>
        <fullName>Coronin-2A</fullName>
    </recommendedName>
</protein>
<gene>
    <name type="primary">Coro2a</name>
</gene>
<accession>Q8C0P5</accession>
<accession>Q3U6H8</accession>
<accession>Q8BW42</accession>
<name>COR2A_MOUSE</name>
<organism>
    <name type="scientific">Mus musculus</name>
    <name type="common">Mouse</name>
    <dbReference type="NCBI Taxonomy" id="10090"/>
    <lineage>
        <taxon>Eukaryota</taxon>
        <taxon>Metazoa</taxon>
        <taxon>Chordata</taxon>
        <taxon>Craniata</taxon>
        <taxon>Vertebrata</taxon>
        <taxon>Euteleostomi</taxon>
        <taxon>Mammalia</taxon>
        <taxon>Eutheria</taxon>
        <taxon>Euarchontoglires</taxon>
        <taxon>Glires</taxon>
        <taxon>Rodentia</taxon>
        <taxon>Myomorpha</taxon>
        <taxon>Muroidea</taxon>
        <taxon>Muridae</taxon>
        <taxon>Murinae</taxon>
        <taxon>Mus</taxon>
        <taxon>Mus</taxon>
    </lineage>
</organism>
<proteinExistence type="evidence at transcript level"/>
<sequence>MSWHPQYRSSKFRHVYGKPASKENCYDSVPITRSVHDNHFCAVNPHFIAVVTECAGGGAFLVIPLHQTGKLDPHYPKVCGHRGNVLDIKWNPFNDFEIASCSEDATIKIWNIPKQLLTRNLTTYRKELIGHARRVGLVEWHPTTANILFSAGYDYKVMVWNLDTKDSVIAGPVKTINCHQDVILSMSFNTNGSLLATTCKDRKIRIVDPRLGIVLQEASYKGHRANKVLFLGSLKKLLSTGTSRWNNRQMALWDQENLSVPLTEEDLDGSSGVLFPFFDSDTSMLYIVGKGDGNIRYYEVSMEKPHLTYLTEYRSYNPQKGIGIMPKRGLDVSSCEIFRFYKLITTKSLIEPVSMIVPRRSESYQEDIYPPTAAAQPSLTAHEWLSGMNRGPIMMSLRPGSELLDSQTLPPERPLSNSMVQVSPQPLEPMKQPAEDGDQAPFSLLEEKLAKWTAEHHLGEKSCLTNGFDVFECSPPKTENELLQMFYRQQEEIRRLRELLIQREVQTKQLELEIKNLRMALGQL</sequence>
<reference key="1">
    <citation type="journal article" date="2005" name="Science">
        <title>The transcriptional landscape of the mammalian genome.</title>
        <authorList>
            <person name="Carninci P."/>
            <person name="Kasukawa T."/>
            <person name="Katayama S."/>
            <person name="Gough J."/>
            <person name="Frith M.C."/>
            <person name="Maeda N."/>
            <person name="Oyama R."/>
            <person name="Ravasi T."/>
            <person name="Lenhard B."/>
            <person name="Wells C."/>
            <person name="Kodzius R."/>
            <person name="Shimokawa K."/>
            <person name="Bajic V.B."/>
            <person name="Brenner S.E."/>
            <person name="Batalov S."/>
            <person name="Forrest A.R."/>
            <person name="Zavolan M."/>
            <person name="Davis M.J."/>
            <person name="Wilming L.G."/>
            <person name="Aidinis V."/>
            <person name="Allen J.E."/>
            <person name="Ambesi-Impiombato A."/>
            <person name="Apweiler R."/>
            <person name="Aturaliya R.N."/>
            <person name="Bailey T.L."/>
            <person name="Bansal M."/>
            <person name="Baxter L."/>
            <person name="Beisel K.W."/>
            <person name="Bersano T."/>
            <person name="Bono H."/>
            <person name="Chalk A.M."/>
            <person name="Chiu K.P."/>
            <person name="Choudhary V."/>
            <person name="Christoffels A."/>
            <person name="Clutterbuck D.R."/>
            <person name="Crowe M.L."/>
            <person name="Dalla E."/>
            <person name="Dalrymple B.P."/>
            <person name="de Bono B."/>
            <person name="Della Gatta G."/>
            <person name="di Bernardo D."/>
            <person name="Down T."/>
            <person name="Engstrom P."/>
            <person name="Fagiolini M."/>
            <person name="Faulkner G."/>
            <person name="Fletcher C.F."/>
            <person name="Fukushima T."/>
            <person name="Furuno M."/>
            <person name="Futaki S."/>
            <person name="Gariboldi M."/>
            <person name="Georgii-Hemming P."/>
            <person name="Gingeras T.R."/>
            <person name="Gojobori T."/>
            <person name="Green R.E."/>
            <person name="Gustincich S."/>
            <person name="Harbers M."/>
            <person name="Hayashi Y."/>
            <person name="Hensch T.K."/>
            <person name="Hirokawa N."/>
            <person name="Hill D."/>
            <person name="Huminiecki L."/>
            <person name="Iacono M."/>
            <person name="Ikeo K."/>
            <person name="Iwama A."/>
            <person name="Ishikawa T."/>
            <person name="Jakt M."/>
            <person name="Kanapin A."/>
            <person name="Katoh M."/>
            <person name="Kawasawa Y."/>
            <person name="Kelso J."/>
            <person name="Kitamura H."/>
            <person name="Kitano H."/>
            <person name="Kollias G."/>
            <person name="Krishnan S.P."/>
            <person name="Kruger A."/>
            <person name="Kummerfeld S.K."/>
            <person name="Kurochkin I.V."/>
            <person name="Lareau L.F."/>
            <person name="Lazarevic D."/>
            <person name="Lipovich L."/>
            <person name="Liu J."/>
            <person name="Liuni S."/>
            <person name="McWilliam S."/>
            <person name="Madan Babu M."/>
            <person name="Madera M."/>
            <person name="Marchionni L."/>
            <person name="Matsuda H."/>
            <person name="Matsuzawa S."/>
            <person name="Miki H."/>
            <person name="Mignone F."/>
            <person name="Miyake S."/>
            <person name="Morris K."/>
            <person name="Mottagui-Tabar S."/>
            <person name="Mulder N."/>
            <person name="Nakano N."/>
            <person name="Nakauchi H."/>
            <person name="Ng P."/>
            <person name="Nilsson R."/>
            <person name="Nishiguchi S."/>
            <person name="Nishikawa S."/>
            <person name="Nori F."/>
            <person name="Ohara O."/>
            <person name="Okazaki Y."/>
            <person name="Orlando V."/>
            <person name="Pang K.C."/>
            <person name="Pavan W.J."/>
            <person name="Pavesi G."/>
            <person name="Pesole G."/>
            <person name="Petrovsky N."/>
            <person name="Piazza S."/>
            <person name="Reed J."/>
            <person name="Reid J.F."/>
            <person name="Ring B.Z."/>
            <person name="Ringwald M."/>
            <person name="Rost B."/>
            <person name="Ruan Y."/>
            <person name="Salzberg S.L."/>
            <person name="Sandelin A."/>
            <person name="Schneider C."/>
            <person name="Schoenbach C."/>
            <person name="Sekiguchi K."/>
            <person name="Semple C.A."/>
            <person name="Seno S."/>
            <person name="Sessa L."/>
            <person name="Sheng Y."/>
            <person name="Shibata Y."/>
            <person name="Shimada H."/>
            <person name="Shimada K."/>
            <person name="Silva D."/>
            <person name="Sinclair B."/>
            <person name="Sperling S."/>
            <person name="Stupka E."/>
            <person name="Sugiura K."/>
            <person name="Sultana R."/>
            <person name="Takenaka Y."/>
            <person name="Taki K."/>
            <person name="Tammoja K."/>
            <person name="Tan S.L."/>
            <person name="Tang S."/>
            <person name="Taylor M.S."/>
            <person name="Tegner J."/>
            <person name="Teichmann S.A."/>
            <person name="Ueda H.R."/>
            <person name="van Nimwegen E."/>
            <person name="Verardo R."/>
            <person name="Wei C.L."/>
            <person name="Yagi K."/>
            <person name="Yamanishi H."/>
            <person name="Zabarovsky E."/>
            <person name="Zhu S."/>
            <person name="Zimmer A."/>
            <person name="Hide W."/>
            <person name="Bult C."/>
            <person name="Grimmond S.M."/>
            <person name="Teasdale R.D."/>
            <person name="Liu E.T."/>
            <person name="Brusic V."/>
            <person name="Quackenbush J."/>
            <person name="Wahlestedt C."/>
            <person name="Mattick J.S."/>
            <person name="Hume D.A."/>
            <person name="Kai C."/>
            <person name="Sasaki D."/>
            <person name="Tomaru Y."/>
            <person name="Fukuda S."/>
            <person name="Kanamori-Katayama M."/>
            <person name="Suzuki M."/>
            <person name="Aoki J."/>
            <person name="Arakawa T."/>
            <person name="Iida J."/>
            <person name="Imamura K."/>
            <person name="Itoh M."/>
            <person name="Kato T."/>
            <person name="Kawaji H."/>
            <person name="Kawagashira N."/>
            <person name="Kawashima T."/>
            <person name="Kojima M."/>
            <person name="Kondo S."/>
            <person name="Konno H."/>
            <person name="Nakano K."/>
            <person name="Ninomiya N."/>
            <person name="Nishio T."/>
            <person name="Okada M."/>
            <person name="Plessy C."/>
            <person name="Shibata K."/>
            <person name="Shiraki T."/>
            <person name="Suzuki S."/>
            <person name="Tagami M."/>
            <person name="Waki K."/>
            <person name="Watahiki A."/>
            <person name="Okamura-Oho Y."/>
            <person name="Suzuki H."/>
            <person name="Kawai J."/>
            <person name="Hayashizaki Y."/>
        </authorList>
    </citation>
    <scope>NUCLEOTIDE SEQUENCE [LARGE SCALE MRNA]</scope>
    <source>
        <strain>C57BL/6J</strain>
        <tissue>Bone marrow</tissue>
        <tissue>Ovary</tissue>
        <tissue>Testis</tissue>
    </source>
</reference>
<feature type="chain" id="PRO_0000050929" description="Coronin-2A">
    <location>
        <begin position="1"/>
        <end position="524"/>
    </location>
</feature>
<feature type="repeat" description="WD 1">
    <location>
        <begin position="80"/>
        <end position="120"/>
    </location>
</feature>
<feature type="repeat" description="WD 2">
    <location>
        <begin position="130"/>
        <end position="170"/>
    </location>
</feature>
<feature type="repeat" description="WD 3">
    <location>
        <begin position="178"/>
        <end position="217"/>
    </location>
</feature>
<feature type="repeat" description="WD 4">
    <location>
        <begin position="220"/>
        <end position="263"/>
    </location>
</feature>
<feature type="repeat" description="WD 5">
    <location>
        <begin position="269"/>
        <end position="308"/>
    </location>
</feature>
<feature type="region of interest" description="Disordered" evidence="3">
    <location>
        <begin position="403"/>
        <end position="436"/>
    </location>
</feature>
<feature type="coiled-coil region" evidence="2">
    <location>
        <begin position="484"/>
        <end position="523"/>
    </location>
</feature>
<feature type="compositionally biased region" description="Polar residues" evidence="3">
    <location>
        <begin position="404"/>
        <end position="424"/>
    </location>
</feature>
<feature type="sequence conflict" description="In Ref. 1; BAC35761." evidence="4" ref="1">
    <original>S</original>
    <variation>R</variation>
    <location>
        <position position="9"/>
    </location>
</feature>
<dbReference type="EMBL" id="AK030097">
    <property type="protein sequence ID" value="BAC26782.1"/>
    <property type="molecule type" value="mRNA"/>
</dbReference>
<dbReference type="EMBL" id="AK054394">
    <property type="protein sequence ID" value="BAC35761.2"/>
    <property type="molecule type" value="mRNA"/>
</dbReference>
<dbReference type="EMBL" id="AK152490">
    <property type="protein sequence ID" value="BAE31261.1"/>
    <property type="molecule type" value="mRNA"/>
</dbReference>
<dbReference type="EMBL" id="AK153134">
    <property type="protein sequence ID" value="BAE31746.1"/>
    <property type="molecule type" value="mRNA"/>
</dbReference>
<dbReference type="CCDS" id="CCDS18154.1"/>
<dbReference type="RefSeq" id="NP_001158276.1">
    <property type="nucleotide sequence ID" value="NM_001164804.1"/>
</dbReference>
<dbReference type="RefSeq" id="NP_849224.2">
    <property type="nucleotide sequence ID" value="NM_178893.4"/>
</dbReference>
<dbReference type="RefSeq" id="XP_036019460.1">
    <property type="nucleotide sequence ID" value="XM_036163567.1"/>
</dbReference>
<dbReference type="SMR" id="Q8C0P5"/>
<dbReference type="BioGRID" id="223484">
    <property type="interactions" value="7"/>
</dbReference>
<dbReference type="DIP" id="DIP-59203N"/>
<dbReference type="FunCoup" id="Q8C0P5">
    <property type="interactions" value="1"/>
</dbReference>
<dbReference type="IntAct" id="Q8C0P5">
    <property type="interactions" value="1"/>
</dbReference>
<dbReference type="STRING" id="10090.ENSMUSP00000103386"/>
<dbReference type="GlyGen" id="Q8C0P5">
    <property type="glycosylation" value="1 site, 1 O-linked glycan (1 site)"/>
</dbReference>
<dbReference type="iPTMnet" id="Q8C0P5"/>
<dbReference type="PhosphoSitePlus" id="Q8C0P5"/>
<dbReference type="SwissPalm" id="Q8C0P5"/>
<dbReference type="PaxDb" id="10090-ENSMUSP00000103385"/>
<dbReference type="ProteomicsDB" id="285252"/>
<dbReference type="Antibodypedia" id="48737">
    <property type="antibodies" value="94 antibodies from 20 providers"/>
</dbReference>
<dbReference type="DNASU" id="107684"/>
<dbReference type="Ensembl" id="ENSMUST00000030021.14">
    <property type="protein sequence ID" value="ENSMUSP00000030021.8"/>
    <property type="gene ID" value="ENSMUSG00000028337.15"/>
</dbReference>
<dbReference type="Ensembl" id="ENSMUST00000107756.4">
    <property type="protein sequence ID" value="ENSMUSP00000103385.3"/>
    <property type="gene ID" value="ENSMUSG00000028337.15"/>
</dbReference>
<dbReference type="GeneID" id="107684"/>
<dbReference type="KEGG" id="mmu:107684"/>
<dbReference type="UCSC" id="uc008sua.2">
    <property type="organism name" value="mouse"/>
</dbReference>
<dbReference type="AGR" id="MGI:1345966"/>
<dbReference type="CTD" id="7464"/>
<dbReference type="MGI" id="MGI:1345966">
    <property type="gene designation" value="Coro2a"/>
</dbReference>
<dbReference type="VEuPathDB" id="HostDB:ENSMUSG00000028337"/>
<dbReference type="eggNOG" id="KOG0303">
    <property type="taxonomic scope" value="Eukaryota"/>
</dbReference>
<dbReference type="GeneTree" id="ENSGT00940000155598"/>
<dbReference type="HOGENOM" id="CLU_026859_4_0_1"/>
<dbReference type="InParanoid" id="Q8C0P5"/>
<dbReference type="OMA" id="TSCEIFR"/>
<dbReference type="OrthoDB" id="1850764at2759"/>
<dbReference type="PhylomeDB" id="Q8C0P5"/>
<dbReference type="TreeFam" id="TF314280"/>
<dbReference type="BioGRID-ORCS" id="107684">
    <property type="hits" value="0 hits in 80 CRISPR screens"/>
</dbReference>
<dbReference type="CD-CODE" id="CE726F99">
    <property type="entry name" value="Postsynaptic density"/>
</dbReference>
<dbReference type="ChiTaRS" id="Coro2a">
    <property type="organism name" value="mouse"/>
</dbReference>
<dbReference type="PRO" id="PR:Q8C0P5"/>
<dbReference type="Proteomes" id="UP000000589">
    <property type="component" value="Chromosome 4"/>
</dbReference>
<dbReference type="RNAct" id="Q8C0P5">
    <property type="molecule type" value="protein"/>
</dbReference>
<dbReference type="Bgee" id="ENSMUSG00000028337">
    <property type="expression patterns" value="Expressed in seminal vesicle and 228 other cell types or tissues"/>
</dbReference>
<dbReference type="ExpressionAtlas" id="Q8C0P5">
    <property type="expression patterns" value="baseline and differential"/>
</dbReference>
<dbReference type="GO" id="GO:0005903">
    <property type="term" value="C:brush border"/>
    <property type="evidence" value="ECO:0000314"/>
    <property type="project" value="UniProtKB"/>
</dbReference>
<dbReference type="GO" id="GO:0017053">
    <property type="term" value="C:transcription repressor complex"/>
    <property type="evidence" value="ECO:0007669"/>
    <property type="project" value="Ensembl"/>
</dbReference>
<dbReference type="GO" id="GO:0003779">
    <property type="term" value="F:actin binding"/>
    <property type="evidence" value="ECO:0000247"/>
    <property type="project" value="MGI"/>
</dbReference>
<dbReference type="FunFam" id="2.130.10.10:FF:000053">
    <property type="entry name" value="Coronin"/>
    <property type="match status" value="1"/>
</dbReference>
<dbReference type="Gene3D" id="2.130.10.10">
    <property type="entry name" value="YVTN repeat-like/Quinoprotein amine dehydrogenase"/>
    <property type="match status" value="1"/>
</dbReference>
<dbReference type="InterPro" id="IPR015505">
    <property type="entry name" value="Coronin"/>
</dbReference>
<dbReference type="InterPro" id="IPR015048">
    <property type="entry name" value="DUF1899"/>
</dbReference>
<dbReference type="InterPro" id="IPR015943">
    <property type="entry name" value="WD40/YVTN_repeat-like_dom_sf"/>
</dbReference>
<dbReference type="InterPro" id="IPR019775">
    <property type="entry name" value="WD40_repeat_CS"/>
</dbReference>
<dbReference type="InterPro" id="IPR036322">
    <property type="entry name" value="WD40_repeat_dom_sf"/>
</dbReference>
<dbReference type="InterPro" id="IPR001680">
    <property type="entry name" value="WD40_rpt"/>
</dbReference>
<dbReference type="PANTHER" id="PTHR10856">
    <property type="entry name" value="CORONIN"/>
    <property type="match status" value="1"/>
</dbReference>
<dbReference type="PANTHER" id="PTHR10856:SF2">
    <property type="entry name" value="CORONIN-2A"/>
    <property type="match status" value="1"/>
</dbReference>
<dbReference type="Pfam" id="PF08953">
    <property type="entry name" value="DUF1899"/>
    <property type="match status" value="1"/>
</dbReference>
<dbReference type="Pfam" id="PF00400">
    <property type="entry name" value="WD40"/>
    <property type="match status" value="3"/>
</dbReference>
<dbReference type="Pfam" id="PF16300">
    <property type="entry name" value="WD40_4"/>
    <property type="match status" value="1"/>
</dbReference>
<dbReference type="SMART" id="SM01166">
    <property type="entry name" value="DUF1899"/>
    <property type="match status" value="1"/>
</dbReference>
<dbReference type="SMART" id="SM01167">
    <property type="entry name" value="DUF1900"/>
    <property type="match status" value="1"/>
</dbReference>
<dbReference type="SMART" id="SM00320">
    <property type="entry name" value="WD40"/>
    <property type="match status" value="3"/>
</dbReference>
<dbReference type="SUPFAM" id="SSF50978">
    <property type="entry name" value="WD40 repeat-like"/>
    <property type="match status" value="1"/>
</dbReference>
<dbReference type="PROSITE" id="PS00678">
    <property type="entry name" value="WD_REPEATS_1"/>
    <property type="match status" value="2"/>
</dbReference>
<dbReference type="PROSITE" id="PS50082">
    <property type="entry name" value="WD_REPEATS_2"/>
    <property type="match status" value="3"/>
</dbReference>
<dbReference type="PROSITE" id="PS50294">
    <property type="entry name" value="WD_REPEATS_REGION"/>
    <property type="match status" value="1"/>
</dbReference>
<keyword id="KW-0009">Actin-binding</keyword>
<keyword id="KW-0175">Coiled coil</keyword>
<keyword id="KW-1185">Reference proteome</keyword>
<keyword id="KW-0677">Repeat</keyword>
<keyword id="KW-0853">WD repeat</keyword>